<sequence>MARTKHTARKSFGGKAPRKSLATKAARKVFPVDGQVKKRYRPSSNALKEIRKYQKSTELLVRKLPFQRLVREVAQEIMPNVRFQSAAIQALHEAAEAYLIGLFEDTNLCAIHAKRVTIMPKDMQLARRIRGERG</sequence>
<dbReference type="EMBL" id="Z38112">
    <property type="protein sequence ID" value="CAA86229.2"/>
    <property type="molecule type" value="Genomic_DNA"/>
</dbReference>
<dbReference type="PIR" id="T20427">
    <property type="entry name" value="T20427"/>
</dbReference>
<dbReference type="RefSeq" id="NP_497812.2">
    <property type="nucleotide sequence ID" value="NM_065411.4"/>
</dbReference>
<dbReference type="SMR" id="Q27490"/>
<dbReference type="FunCoup" id="Q27490">
    <property type="interactions" value="1"/>
</dbReference>
<dbReference type="STRING" id="6239.E03A3.4.1"/>
<dbReference type="PaxDb" id="6239-E03A3.4"/>
<dbReference type="PeptideAtlas" id="Q27490"/>
<dbReference type="EnsemblMetazoa" id="E03A3.4.1">
    <property type="protein sequence ID" value="E03A3.4.1"/>
    <property type="gene ID" value="WBGene00001944"/>
</dbReference>
<dbReference type="GeneID" id="184006"/>
<dbReference type="KEGG" id="cel:CELE_E03A3.4"/>
<dbReference type="UCSC" id="E03A3.4">
    <property type="organism name" value="c. elegans"/>
</dbReference>
<dbReference type="AGR" id="WB:WBGene00001944"/>
<dbReference type="CTD" id="184006"/>
<dbReference type="WormBase" id="E03A3.4">
    <property type="protein sequence ID" value="CE44880"/>
    <property type="gene ID" value="WBGene00001944"/>
    <property type="gene designation" value="his-70"/>
</dbReference>
<dbReference type="eggNOG" id="KOG1745">
    <property type="taxonomic scope" value="Eukaryota"/>
</dbReference>
<dbReference type="GeneTree" id="ENSGT01110000267215"/>
<dbReference type="HOGENOM" id="CLU_078295_4_0_1"/>
<dbReference type="InParanoid" id="Q27490"/>
<dbReference type="OrthoDB" id="5867621at2759"/>
<dbReference type="PhylomeDB" id="Q27490"/>
<dbReference type="PRO" id="PR:Q27490"/>
<dbReference type="Proteomes" id="UP000001940">
    <property type="component" value="Chromosome III"/>
</dbReference>
<dbReference type="Bgee" id="WBGene00001944">
    <property type="expression patterns" value="Expressed in larva and 1 other cell type or tissue"/>
</dbReference>
<dbReference type="GO" id="GO:0000786">
    <property type="term" value="C:nucleosome"/>
    <property type="evidence" value="ECO:0007669"/>
    <property type="project" value="UniProtKB-KW"/>
</dbReference>
<dbReference type="GO" id="GO:0005634">
    <property type="term" value="C:nucleus"/>
    <property type="evidence" value="ECO:0000318"/>
    <property type="project" value="GO_Central"/>
</dbReference>
<dbReference type="GO" id="GO:0003677">
    <property type="term" value="F:DNA binding"/>
    <property type="evidence" value="ECO:0007669"/>
    <property type="project" value="UniProtKB-KW"/>
</dbReference>
<dbReference type="GO" id="GO:0046982">
    <property type="term" value="F:protein heterodimerization activity"/>
    <property type="evidence" value="ECO:0007669"/>
    <property type="project" value="InterPro"/>
</dbReference>
<dbReference type="GO" id="GO:0030527">
    <property type="term" value="F:structural constituent of chromatin"/>
    <property type="evidence" value="ECO:0007669"/>
    <property type="project" value="InterPro"/>
</dbReference>
<dbReference type="CDD" id="cd22911">
    <property type="entry name" value="HFD_H3"/>
    <property type="match status" value="1"/>
</dbReference>
<dbReference type="FunFam" id="1.10.20.10:FF:000001">
    <property type="entry name" value="Histone H3"/>
    <property type="match status" value="1"/>
</dbReference>
<dbReference type="Gene3D" id="1.10.20.10">
    <property type="entry name" value="Histone, subunit A"/>
    <property type="match status" value="1"/>
</dbReference>
<dbReference type="InterPro" id="IPR009072">
    <property type="entry name" value="Histone-fold"/>
</dbReference>
<dbReference type="InterPro" id="IPR007125">
    <property type="entry name" value="Histone_H2A/H2B/H3"/>
</dbReference>
<dbReference type="InterPro" id="IPR000164">
    <property type="entry name" value="Histone_H3/CENP-A"/>
</dbReference>
<dbReference type="PANTHER" id="PTHR11426">
    <property type="entry name" value="HISTONE H3"/>
    <property type="match status" value="1"/>
</dbReference>
<dbReference type="Pfam" id="PF00125">
    <property type="entry name" value="Histone"/>
    <property type="match status" value="1"/>
</dbReference>
<dbReference type="PRINTS" id="PR00622">
    <property type="entry name" value="HISTONEH3"/>
</dbReference>
<dbReference type="SMART" id="SM00428">
    <property type="entry name" value="H3"/>
    <property type="match status" value="1"/>
</dbReference>
<dbReference type="SUPFAM" id="SSF47113">
    <property type="entry name" value="Histone-fold"/>
    <property type="match status" value="1"/>
</dbReference>
<dbReference type="PROSITE" id="PS00959">
    <property type="entry name" value="HISTONE_H3_2"/>
    <property type="match status" value="1"/>
</dbReference>
<protein>
    <recommendedName>
        <fullName>Histone H3.3-like type 1</fullName>
    </recommendedName>
</protein>
<keyword id="KW-0007">Acetylation</keyword>
<keyword id="KW-0158">Chromosome</keyword>
<keyword id="KW-0238">DNA-binding</keyword>
<keyword id="KW-0488">Methylation</keyword>
<keyword id="KW-0544">Nucleosome core</keyword>
<keyword id="KW-0539">Nucleus</keyword>
<keyword id="KW-0597">Phosphoprotein</keyword>
<keyword id="KW-1185">Reference proteome</keyword>
<comment type="function">
    <text evidence="1">Putative variant histone H3 which may replace conventional H3 in a subset of nucleosomes. Nucleosomes wrap and compact DNA into chromatin, limiting DNA accessibility to the cellular machineries which require DNA as a template. Histones thereby play a central role in transcription regulation, DNA repair, DNA replication and chromosomal stability. DNA accessibility is regulated via a complex set of post-translational modifications of histones, also called histone code, and nucleosome remodeling (By similarity).</text>
</comment>
<comment type="subunit">
    <text evidence="1">The nucleosome is a histone octamer containing two molecules each of H2A, H2B, H3 and H4 assembled in one H3-H4 heterotetramer and two H2A-H2B heterodimers. The octamer wraps approximately 147 bp of DNA (By similarity).</text>
</comment>
<comment type="subcellular location">
    <subcellularLocation>
        <location evidence="1">Nucleus</location>
    </subcellularLocation>
    <subcellularLocation>
        <location evidence="1">Chromosome</location>
    </subcellularLocation>
</comment>
<comment type="PTM">
    <text evidence="1">Acetylation is generally linked to gene activation.</text>
</comment>
<comment type="PTM">
    <text evidence="1">Methylation at Lys-5 is linked to gene activation. Methylation at Lys-10 is linked to gene repression (By similarity).</text>
</comment>
<comment type="similarity">
    <text evidence="3">Belongs to the histone H3 family.</text>
</comment>
<feature type="initiator methionine" description="Removed" evidence="1">
    <location>
        <position position="1"/>
    </location>
</feature>
<feature type="chain" id="PRO_0000268633" description="Histone H3.3-like type 1">
    <location>
        <begin position="2"/>
        <end position="134"/>
    </location>
</feature>
<feature type="region of interest" description="Disordered" evidence="2">
    <location>
        <begin position="1"/>
        <end position="25"/>
    </location>
</feature>
<feature type="modified residue" description="N6-acetyllysine; alternate" evidence="1">
    <location>
        <position position="5"/>
    </location>
</feature>
<feature type="modified residue" description="N6-methylated lysine; alternate" evidence="1">
    <location>
        <position position="5"/>
    </location>
</feature>
<feature type="modified residue" description="N6-acetyllysine; alternate" evidence="1">
    <location>
        <position position="10"/>
    </location>
</feature>
<feature type="modified residue" description="N6-methylated lysine; alternate" evidence="1">
    <location>
        <position position="10"/>
    </location>
</feature>
<feature type="modified residue" description="Phosphoserine" evidence="1">
    <location>
        <position position="11"/>
    </location>
</feature>
<feature type="modified residue" description="N6-acetyllysine" evidence="1">
    <location>
        <position position="15"/>
    </location>
</feature>
<feature type="modified residue" description="N6-acetyllysine" evidence="1">
    <location>
        <position position="24"/>
    </location>
</feature>
<feature type="modified residue" description="N6-methylated lysine" evidence="1">
    <location>
        <position position="28"/>
    </location>
</feature>
<feature type="modified residue" description="N6-methylated lysine" evidence="1">
    <location>
        <position position="37"/>
    </location>
</feature>
<organism>
    <name type="scientific">Caenorhabditis elegans</name>
    <dbReference type="NCBI Taxonomy" id="6239"/>
    <lineage>
        <taxon>Eukaryota</taxon>
        <taxon>Metazoa</taxon>
        <taxon>Ecdysozoa</taxon>
        <taxon>Nematoda</taxon>
        <taxon>Chromadorea</taxon>
        <taxon>Rhabditida</taxon>
        <taxon>Rhabditina</taxon>
        <taxon>Rhabditomorpha</taxon>
        <taxon>Rhabditoidea</taxon>
        <taxon>Rhabditidae</taxon>
        <taxon>Peloderinae</taxon>
        <taxon>Caenorhabditis</taxon>
    </lineage>
</organism>
<gene>
    <name type="primary">his-70</name>
    <name type="ORF">E03A3.4</name>
</gene>
<accession>Q27490</accession>
<proteinExistence type="inferred from homology"/>
<name>H33L1_CAEEL</name>
<evidence type="ECO:0000250" key="1"/>
<evidence type="ECO:0000256" key="2">
    <source>
        <dbReference type="SAM" id="MobiDB-lite"/>
    </source>
</evidence>
<evidence type="ECO:0000305" key="3"/>
<reference key="1">
    <citation type="journal article" date="1998" name="Science">
        <title>Genome sequence of the nematode C. elegans: a platform for investigating biology.</title>
        <authorList>
            <consortium name="The C. elegans sequencing consortium"/>
        </authorList>
    </citation>
    <scope>NUCLEOTIDE SEQUENCE [LARGE SCALE GENOMIC DNA]</scope>
    <source>
        <strain>Bristol N2</strain>
    </source>
</reference>
<reference key="2">
    <citation type="journal article" date="2006" name="PLoS Genet.">
        <title>Histone H3.3 variant dynamics in the germline of Caenorhabditis elegans.</title>
        <authorList>
            <person name="Ooi S.L."/>
            <person name="Priess J.R."/>
            <person name="Henikoff S."/>
        </authorList>
    </citation>
    <scope>IDENTIFICATION</scope>
</reference>